<protein>
    <recommendedName>
        <fullName>Minor tail protein Gp28</fullName>
    </recommendedName>
</protein>
<feature type="initiator methionine" description="Removed; by host" evidence="1">
    <location>
        <position position="1"/>
    </location>
</feature>
<feature type="chain" id="PRO_0000164745" description="Minor tail protein Gp28">
    <location>
        <begin position="2"/>
        <end position="596"/>
    </location>
</feature>
<gene>
    <name type="primary">28</name>
</gene>
<organism>
    <name type="scientific">Mycobacterium phage L5</name>
    <name type="common">Mycobacteriophage L5</name>
    <dbReference type="NCBI Taxonomy" id="31757"/>
    <lineage>
        <taxon>Viruses</taxon>
        <taxon>Duplodnaviria</taxon>
        <taxon>Heunggongvirae</taxon>
        <taxon>Uroviricota</taxon>
        <taxon>Caudoviricetes</taxon>
        <taxon>Fromanvirus</taxon>
    </lineage>
</organism>
<sequence>MSGLTSVREAEDLWQKIQLRRCKREQERLKHPDVELRDGDFRLRGLVAGERVLEWEFIENETGTCTLQLSLSHYLAKWVMDHRGRAKRNVIINIEKQGARWTGMMDHYRVIKTDAGDAYIEIVFLHDFEQTKHIRVWCNPFLRPELQFPKVWIIFGPAKWCLLVTLFVNLLRLETSLWTLPDDPTDINEWMGPSFNPANWRNIVKPFPFLADNSPVTMVFSRFGTFYDTAKKILEDHQLTLTCRRYIKDRDPHPFEDLKGLWGIDPVEDLLQKIPLRDGCVVWDIEDNSGWGTQTAFGGSWLTGFVRGMVQLAGDGQVEGVDVFTGDYTFPGEYYSPWFMGTSPIAPHVVFEEGPLTGIKSSEFSYYEATDTSFLAGGQSAPGINEGISALVNIGGDLLTSFINSQLAALGAVGGAIDLPPLGGLLDAVLQPLYSDVFGAFMEVPTLRAMGISLPISGLEDIVTGLGDFHYFENMADGAMKAFTLSAFAAIASQIHKTRARTTHTLKVSDAAPYIFAPKPYGHCWIGDRVGTSVLGYPVEHQLFVERIRKVKYRIDKDGMKPLEIEIGYREPKNPALHILEEIKRVNGALGTAGIL</sequence>
<keyword id="KW-0903">Direct protein sequencing</keyword>
<keyword id="KW-1185">Reference proteome</keyword>
<dbReference type="EMBL" id="Z18946">
    <property type="protein sequence ID" value="CAA79404.1"/>
    <property type="molecule type" value="Genomic_DNA"/>
</dbReference>
<dbReference type="PIR" id="S30973">
    <property type="entry name" value="S30973"/>
</dbReference>
<dbReference type="RefSeq" id="NP_039692.1">
    <property type="nucleotide sequence ID" value="NC_001335.1"/>
</dbReference>
<dbReference type="SMR" id="Q05235"/>
<dbReference type="GeneID" id="2942940"/>
<dbReference type="KEGG" id="vg:2942940"/>
<dbReference type="OrthoDB" id="1419at10239"/>
<dbReference type="Proteomes" id="UP000002123">
    <property type="component" value="Genome"/>
</dbReference>
<evidence type="ECO:0000269" key="1">
    <source>
    </source>
</evidence>
<proteinExistence type="evidence at protein level"/>
<reference key="1">
    <citation type="journal article" date="1993" name="Mol. Microbiol.">
        <title>DNA sequence, structure and gene expression of mycobacteriophage L5: a phage system for mycobacterial genetics.</title>
        <authorList>
            <person name="Hatfull G.F."/>
            <person name="Sarkis G.J."/>
        </authorList>
    </citation>
    <scope>NUCLEOTIDE SEQUENCE [GENOMIC DNA]</scope>
    <scope>PROTEIN SEQUENCE OF 2-9</scope>
</reference>
<name>VG28_BPML5</name>
<organismHost>
    <name type="scientific">Mycobacterium</name>
    <dbReference type="NCBI Taxonomy" id="1763"/>
</organismHost>
<accession>Q05235</accession>